<evidence type="ECO:0000250" key="1">
    <source>
        <dbReference type="UniProtKB" id="Q07020"/>
    </source>
</evidence>
<evidence type="ECO:0000250" key="2">
    <source>
        <dbReference type="UniProtKB" id="Q95342"/>
    </source>
</evidence>
<evidence type="ECO:0000256" key="3">
    <source>
        <dbReference type="SAM" id="MobiDB-lite"/>
    </source>
</evidence>
<evidence type="ECO:0000305" key="4"/>
<comment type="function">
    <text evidence="1">Component of the large ribosomal subunit. The ribosome is a large ribonucleoprotein complex responsible for the synthesis of proteins in the cell.</text>
</comment>
<comment type="subunit">
    <text evidence="1">Component of the large ribosomal subunit.</text>
</comment>
<comment type="subcellular location">
    <subcellularLocation>
        <location evidence="1">Cytoplasm</location>
        <location evidence="1">Cytosol</location>
    </subcellularLocation>
    <subcellularLocation>
        <location evidence="1">Cytoplasm</location>
    </subcellularLocation>
    <subcellularLocation>
        <location evidence="2">Rough endoplasmic reticulum</location>
    </subcellularLocation>
    <text evidence="1 2">Detected on cytosolic polysomes (By similarity). Detected in ribosomes that are associated with the rough endoplasmic reticulum (By similarity).</text>
</comment>
<comment type="similarity">
    <text evidence="4">Belongs to the eukaryotic ribosomal protein eL18 family.</text>
</comment>
<feature type="chain" id="PRO_0000132777" description="Large ribosomal subunit protein eL18">
    <location>
        <begin position="1"/>
        <end position="188"/>
    </location>
</feature>
<feature type="region of interest" description="Disordered" evidence="3">
    <location>
        <begin position="153"/>
        <end position="188"/>
    </location>
</feature>
<feature type="compositionally biased region" description="Basic residues" evidence="3">
    <location>
        <begin position="161"/>
        <end position="171"/>
    </location>
</feature>
<organism>
    <name type="scientific">Oreochromis niloticus</name>
    <name type="common">Nile tilapia</name>
    <name type="synonym">Tilapia nilotica</name>
    <dbReference type="NCBI Taxonomy" id="8128"/>
    <lineage>
        <taxon>Eukaryota</taxon>
        <taxon>Metazoa</taxon>
        <taxon>Chordata</taxon>
        <taxon>Craniata</taxon>
        <taxon>Vertebrata</taxon>
        <taxon>Euteleostomi</taxon>
        <taxon>Actinopterygii</taxon>
        <taxon>Neopterygii</taxon>
        <taxon>Teleostei</taxon>
        <taxon>Neoteleostei</taxon>
        <taxon>Acanthomorphata</taxon>
        <taxon>Ovalentaria</taxon>
        <taxon>Cichlomorphae</taxon>
        <taxon>Cichliformes</taxon>
        <taxon>Cichlidae</taxon>
        <taxon>African cichlids</taxon>
        <taxon>Pseudocrenilabrinae</taxon>
        <taxon>Oreochromini</taxon>
        <taxon>Oreochromis</taxon>
    </lineage>
</organism>
<accession>P69091</accession>
<accession>Q9I836</accession>
<name>RL18_ORENI</name>
<sequence length="188" mass="21531">MGVDIRHNKDRKVHRKEPKSQDIYLRLLVKLYRFLARRSNAPFNRVVLRRLFMSRTNRPPIAVSRLIRKMKLPGRENKIAVVVGTVTDDVRIQDIPKLKICALRVTDGARRRILKAGGQVMTFDQLALASPKGQGTVLLSGPRKAREVYRHFGKAPGTPHSHTKPYVRSKGRKFERARGRRASCGYKN</sequence>
<proteinExistence type="evidence at transcript level"/>
<dbReference type="EMBL" id="AF240374">
    <property type="protein sequence ID" value="AAF64457.1"/>
    <property type="molecule type" value="mRNA"/>
</dbReference>
<dbReference type="EMBL" id="AF240375">
    <property type="protein sequence ID" value="AAF64458.1"/>
    <property type="molecule type" value="mRNA"/>
</dbReference>
<dbReference type="RefSeq" id="NP_001266392.1">
    <property type="nucleotide sequence ID" value="NM_001279463.1"/>
</dbReference>
<dbReference type="SMR" id="P69091"/>
<dbReference type="FunCoup" id="P69091">
    <property type="interactions" value="1941"/>
</dbReference>
<dbReference type="STRING" id="8128.ENSONIP00000008247"/>
<dbReference type="Ensembl" id="ENSONIT00000008252.2">
    <property type="protein sequence ID" value="ENSONIP00000008247.1"/>
    <property type="gene ID" value="ENSONIG00000006539.2"/>
</dbReference>
<dbReference type="GeneID" id="100534549"/>
<dbReference type="KEGG" id="onl:100534549"/>
<dbReference type="CTD" id="6141"/>
<dbReference type="eggNOG" id="KOG1714">
    <property type="taxonomic scope" value="Eukaryota"/>
</dbReference>
<dbReference type="GeneTree" id="ENSGT00390000012976"/>
<dbReference type="HOGENOM" id="CLU_080024_0_0_1"/>
<dbReference type="InParanoid" id="P69091"/>
<dbReference type="OMA" id="IDICHKN"/>
<dbReference type="OrthoDB" id="6353017at2759"/>
<dbReference type="Proteomes" id="UP000005207">
    <property type="component" value="Linkage group LG11"/>
</dbReference>
<dbReference type="GO" id="GO:0022625">
    <property type="term" value="C:cytosolic large ribosomal subunit"/>
    <property type="evidence" value="ECO:0000250"/>
    <property type="project" value="UniProtKB"/>
</dbReference>
<dbReference type="GO" id="GO:0005791">
    <property type="term" value="C:rough endoplasmic reticulum"/>
    <property type="evidence" value="ECO:0007669"/>
    <property type="project" value="UniProtKB-SubCell"/>
</dbReference>
<dbReference type="GO" id="GO:0003723">
    <property type="term" value="F:RNA binding"/>
    <property type="evidence" value="ECO:0007669"/>
    <property type="project" value="TreeGrafter"/>
</dbReference>
<dbReference type="GO" id="GO:0003735">
    <property type="term" value="F:structural constituent of ribosome"/>
    <property type="evidence" value="ECO:0007669"/>
    <property type="project" value="InterPro"/>
</dbReference>
<dbReference type="GO" id="GO:0002181">
    <property type="term" value="P:cytoplasmic translation"/>
    <property type="evidence" value="ECO:0000250"/>
    <property type="project" value="UniProtKB"/>
</dbReference>
<dbReference type="GO" id="GO:0043249">
    <property type="term" value="P:erythrocyte maturation"/>
    <property type="evidence" value="ECO:0007669"/>
    <property type="project" value="Ensembl"/>
</dbReference>
<dbReference type="FunFam" id="3.100.10.10:FF:000001">
    <property type="entry name" value="60S ribosomal protein L18"/>
    <property type="match status" value="1"/>
</dbReference>
<dbReference type="Gene3D" id="3.100.10.10">
    <property type="match status" value="1"/>
</dbReference>
<dbReference type="InterPro" id="IPR000039">
    <property type="entry name" value="Ribosomal_eL18"/>
</dbReference>
<dbReference type="InterPro" id="IPR021132">
    <property type="entry name" value="Ribosomal_eL18/eL18-A/B/_CS"/>
</dbReference>
<dbReference type="InterPro" id="IPR021131">
    <property type="entry name" value="Ribosomal_uL15/eL18"/>
</dbReference>
<dbReference type="InterPro" id="IPR036227">
    <property type="entry name" value="Ribosomal_uL15/eL18_sf"/>
</dbReference>
<dbReference type="PANTHER" id="PTHR10934">
    <property type="entry name" value="60S RIBOSOMAL PROTEIN L18"/>
    <property type="match status" value="1"/>
</dbReference>
<dbReference type="PANTHER" id="PTHR10934:SF2">
    <property type="entry name" value="LARGE RIBOSOMAL SUBUNIT PROTEIN EL18"/>
    <property type="match status" value="1"/>
</dbReference>
<dbReference type="Pfam" id="PF17135">
    <property type="entry name" value="Ribosomal_L18"/>
    <property type="match status" value="1"/>
</dbReference>
<dbReference type="SUPFAM" id="SSF52080">
    <property type="entry name" value="Ribosomal proteins L15p and L18e"/>
    <property type="match status" value="1"/>
</dbReference>
<dbReference type="PROSITE" id="PS01106">
    <property type="entry name" value="RIBOSOMAL_L18E"/>
    <property type="match status" value="1"/>
</dbReference>
<keyword id="KW-0963">Cytoplasm</keyword>
<keyword id="KW-0256">Endoplasmic reticulum</keyword>
<keyword id="KW-1185">Reference proteome</keyword>
<keyword id="KW-0687">Ribonucleoprotein</keyword>
<keyword id="KW-0689">Ribosomal protein</keyword>
<gene>
    <name type="primary">rpl18</name>
</gene>
<protein>
    <recommendedName>
        <fullName evidence="4">Large ribosomal subunit protein eL18</fullName>
    </recommendedName>
    <alternativeName>
        <fullName>60S ribosomal protein L18</fullName>
    </alternativeName>
</protein>
<reference key="1">
    <citation type="submission" date="2000-03" db="EMBL/GenBank/DDBJ databases">
        <title>Cloning and expression analysis of the tilapia (Oreochromis mossambicus)ribosomal protein L18 gene.</title>
        <authorList>
            <person name="Molina A.I. Jr."/>
            <person name="Biemar F."/>
            <person name="Iyengar A."/>
            <person name="Maclean N."/>
            <person name="Martial J.A."/>
            <person name="Muller M."/>
        </authorList>
    </citation>
    <scope>NUCLEOTIDE SEQUENCE [MRNA]</scope>
    <source>
        <tissue>Liver</tissue>
    </source>
</reference>